<keyword id="KW-0687">Ribonucleoprotein</keyword>
<keyword id="KW-0689">Ribosomal protein</keyword>
<dbReference type="EMBL" id="AE001439">
    <property type="protein sequence ID" value="AAD05758.1"/>
    <property type="molecule type" value="Genomic_DNA"/>
</dbReference>
<dbReference type="PIR" id="G71964">
    <property type="entry name" value="G71964"/>
</dbReference>
<dbReference type="RefSeq" id="WP_000290431.1">
    <property type="nucleotide sequence ID" value="NZ_CP011330.1"/>
</dbReference>
<dbReference type="SMR" id="Q9ZMN2"/>
<dbReference type="KEGG" id="hpj:jhp_0186"/>
<dbReference type="PATRIC" id="fig|85963.30.peg.835"/>
<dbReference type="eggNOG" id="COG0333">
    <property type="taxonomic scope" value="Bacteria"/>
</dbReference>
<dbReference type="Proteomes" id="UP000000804">
    <property type="component" value="Chromosome"/>
</dbReference>
<dbReference type="GO" id="GO:0015934">
    <property type="term" value="C:large ribosomal subunit"/>
    <property type="evidence" value="ECO:0007669"/>
    <property type="project" value="InterPro"/>
</dbReference>
<dbReference type="GO" id="GO:0003735">
    <property type="term" value="F:structural constituent of ribosome"/>
    <property type="evidence" value="ECO:0007669"/>
    <property type="project" value="InterPro"/>
</dbReference>
<dbReference type="GO" id="GO:0006412">
    <property type="term" value="P:translation"/>
    <property type="evidence" value="ECO:0007669"/>
    <property type="project" value="UniProtKB-UniRule"/>
</dbReference>
<dbReference type="HAMAP" id="MF_00340">
    <property type="entry name" value="Ribosomal_bL32"/>
    <property type="match status" value="1"/>
</dbReference>
<dbReference type="InterPro" id="IPR002677">
    <property type="entry name" value="Ribosomal_bL32"/>
</dbReference>
<dbReference type="InterPro" id="IPR011332">
    <property type="entry name" value="Ribosomal_zn-bd"/>
</dbReference>
<dbReference type="NCBIfam" id="TIGR01031">
    <property type="entry name" value="rpmF_bact"/>
    <property type="match status" value="1"/>
</dbReference>
<dbReference type="Pfam" id="PF01783">
    <property type="entry name" value="Ribosomal_L32p"/>
    <property type="match status" value="1"/>
</dbReference>
<dbReference type="SUPFAM" id="SSF57829">
    <property type="entry name" value="Zn-binding ribosomal proteins"/>
    <property type="match status" value="1"/>
</dbReference>
<evidence type="ECO:0000250" key="1"/>
<evidence type="ECO:0000305" key="2"/>
<proteinExistence type="inferred from homology"/>
<feature type="initiator methionine" description="Removed" evidence="1">
    <location>
        <position position="1"/>
    </location>
</feature>
<feature type="chain" id="PRO_0000172349" description="Large ribosomal subunit protein bL32">
    <location>
        <begin position="2"/>
        <end position="48"/>
    </location>
</feature>
<comment type="similarity">
    <text evidence="2">Belongs to the bacterial ribosomal protein bL32 family.</text>
</comment>
<reference key="1">
    <citation type="journal article" date="1999" name="Nature">
        <title>Genomic sequence comparison of two unrelated isolates of the human gastric pathogen Helicobacter pylori.</title>
        <authorList>
            <person name="Alm R.A."/>
            <person name="Ling L.-S.L."/>
            <person name="Moir D.T."/>
            <person name="King B.L."/>
            <person name="Brown E.D."/>
            <person name="Doig P.C."/>
            <person name="Smith D.R."/>
            <person name="Noonan B."/>
            <person name="Guild B.C."/>
            <person name="deJonge B.L."/>
            <person name="Carmel G."/>
            <person name="Tummino P.J."/>
            <person name="Caruso A."/>
            <person name="Uria-Nickelsen M."/>
            <person name="Mills D.M."/>
            <person name="Ives C."/>
            <person name="Gibson R."/>
            <person name="Merberg D."/>
            <person name="Mills S.D."/>
            <person name="Jiang Q."/>
            <person name="Taylor D.E."/>
            <person name="Vovis G.F."/>
            <person name="Trust T.J."/>
        </authorList>
    </citation>
    <scope>NUCLEOTIDE SEQUENCE [LARGE SCALE GENOMIC DNA]</scope>
    <source>
        <strain>J99 / ATCC 700824</strain>
    </source>
</reference>
<organism>
    <name type="scientific">Helicobacter pylori (strain J99 / ATCC 700824)</name>
    <name type="common">Campylobacter pylori J99</name>
    <dbReference type="NCBI Taxonomy" id="85963"/>
    <lineage>
        <taxon>Bacteria</taxon>
        <taxon>Pseudomonadati</taxon>
        <taxon>Campylobacterota</taxon>
        <taxon>Epsilonproteobacteria</taxon>
        <taxon>Campylobacterales</taxon>
        <taxon>Helicobacteraceae</taxon>
        <taxon>Helicobacter</taxon>
    </lineage>
</organism>
<gene>
    <name type="primary">rpmF</name>
    <name type="ordered locus">jhp_0186</name>
</gene>
<sequence>MAVPDRRVSKTRAAKRRTHYSVKLAKPVKAKDGTWKLPHHINKFTKEY</sequence>
<accession>Q9ZMN2</accession>
<name>RL32_HELPJ</name>
<protein>
    <recommendedName>
        <fullName evidence="2">Large ribosomal subunit protein bL32</fullName>
    </recommendedName>
    <alternativeName>
        <fullName>50S ribosomal protein L32</fullName>
    </alternativeName>
</protein>